<sequence>MATPTSVASSASRDMVQRIHRVTRENRHLWYQLTVLQQPERARACGSGMKANSDRRPVDPPPVVELRIIEGPSVEEGKDITFDYNANFFLYASLEQARPIAHGRVQNGATNNPPILTGVPASGMAYLDRPTEAGYFIFPDLSVRHEGYFRLSFSLYETTKESKDFDMEPADSDLPAGVDWRMEIKTQPFNVFSAKKFPGLMESTSLSKTVADQGCRVRIRRDVRMRKRDGKGSGYDRREEEYARRRTVTPAPAEDPMRARSTSNASEHRAPYMPQDSQRRPSAAESYHAPSLPHAPSLPHAPPPPAYDAPPPAARPGHLQFGGEQNMPQYGGPAPPRSYAHPQGAPIPPVTPTGPYPTASAPSPYPKHDSQPYSYGPRPPVSSASPAPPMKHAGYDSRPSEPYAPQSPSGYTPTERRPSFVSYPSPAPMTPYIAPPAPSPARHMPTQSSLAPLKIASLVSPLPPIEAQTEPLPPPPLLPTGGKRKHDYVFSQNTKPLHNGQRQLDAHFGHGYRGLTPEPDQGLYSRADGQIGVVTFNQYQV</sequence>
<organism>
    <name type="scientific">Hypocrea virens (strain Gv29-8 / FGSC 10586)</name>
    <name type="common">Gliocladium virens</name>
    <name type="synonym">Trichoderma virens</name>
    <dbReference type="NCBI Taxonomy" id="413071"/>
    <lineage>
        <taxon>Eukaryota</taxon>
        <taxon>Fungi</taxon>
        <taxon>Dikarya</taxon>
        <taxon>Ascomycota</taxon>
        <taxon>Pezizomycotina</taxon>
        <taxon>Sordariomycetes</taxon>
        <taxon>Hypocreomycetidae</taxon>
        <taxon>Hypocreales</taxon>
        <taxon>Hypocreaceae</taxon>
        <taxon>Trichoderma</taxon>
    </lineage>
</organism>
<feature type="chain" id="PRO_0000435777" description="Developmental and secondary metabolism regulator VEL1">
    <location>
        <begin position="1"/>
        <end position="541"/>
    </location>
</feature>
<feature type="domain" description="Velvet" evidence="2">
    <location>
        <begin position="26"/>
        <end position="220"/>
    </location>
</feature>
<feature type="region of interest" description="Disordered" evidence="3">
    <location>
        <begin position="222"/>
        <end position="447"/>
    </location>
</feature>
<feature type="region of interest" description="PEST" evidence="1">
    <location>
        <begin position="444"/>
        <end position="472"/>
    </location>
</feature>
<feature type="region of interest" description="Disordered" evidence="3">
    <location>
        <begin position="464"/>
        <end position="483"/>
    </location>
</feature>
<feature type="short sequence motif" description="Nuclear localization signal" evidence="1">
    <location>
        <begin position="40"/>
        <end position="45"/>
    </location>
</feature>
<feature type="compositionally biased region" description="Basic and acidic residues" evidence="3">
    <location>
        <begin position="230"/>
        <end position="244"/>
    </location>
</feature>
<feature type="compositionally biased region" description="Low complexity" evidence="3">
    <location>
        <begin position="289"/>
        <end position="298"/>
    </location>
</feature>
<feature type="compositionally biased region" description="Pro residues" evidence="3">
    <location>
        <begin position="299"/>
        <end position="314"/>
    </location>
</feature>
<feature type="compositionally biased region" description="Pro residues" evidence="3">
    <location>
        <begin position="345"/>
        <end position="355"/>
    </location>
</feature>
<feature type="compositionally biased region" description="Pro residues" evidence="3">
    <location>
        <begin position="425"/>
        <end position="439"/>
    </location>
</feature>
<proteinExistence type="inferred from homology"/>
<comment type="function">
    <text evidence="1 4">Component of the velvet transcription factor complex that controls sexual/asexual developmental ratio in response to light, promoting sexual development in the darkness while stimulating asexual sporulation under illumination (By similarity). The velvet complex acts as a global regulator for secondary metabolite gene expression (PubMed:20154111). Controls the expression of the gliotoxin gene cluster (PubMed:20154111). Plays a key role in mycoparasitism (PubMed:20154111).</text>
</comment>
<comment type="subunit">
    <text evidence="1">Component of the heterotrimeric velvet complex composed of LAE1, VEL1 and VEL2; VEL1 acting as a bridging protein between LAE1 and VEL2 (By similarity).</text>
</comment>
<comment type="subcellular location">
    <subcellularLocation>
        <location evidence="1">Nucleus</location>
    </subcellularLocation>
    <subcellularLocation>
        <location evidence="1">Cytoplasm</location>
    </subcellularLocation>
    <text evidence="1">Enriched in the nucleus in the dark (By similarity).</text>
</comment>
<comment type="domain">
    <text evidence="1">The C-terminal PEST domain is a region rich in proline, glutamic acid, serine and threonine residues that is required for the light-dependent regulation of development and secondary metabolism (By similarity).</text>
</comment>
<comment type="disruption phenotype">
    <text evidence="4">Exhibit early chlamydospore differentiation under nutrient stress conditions (PubMed:20154111). Impairs gliotoxin production and induction of other secondary metabolism-related genes including genes encoding nonribosomal peptide synthetases, 2 polyketide synthases, an O-methyl transferase, and cytochrome P450 (PubMed:20154111). Impairs mycoparasitism (PubMed:20154111).</text>
</comment>
<comment type="similarity">
    <text evidence="6">Belongs to the velvet family. VeA subfamily.</text>
</comment>
<reference key="1">
    <citation type="journal article" date="2011" name="Genome Biol.">
        <title>Comparative genome sequence analysis underscores mycoparasitism as the ancestral life style of Trichoderma.</title>
        <authorList>
            <person name="Kubicek C.P."/>
            <person name="Herrera-Estrella A."/>
            <person name="Seidl-Seiboth V."/>
            <person name="Martinez D.A."/>
            <person name="Druzhinina I.S."/>
            <person name="Thon M."/>
            <person name="Zeilinger S."/>
            <person name="Casas-Flores S."/>
            <person name="Horwitz B.A."/>
            <person name="Mukherjee P.K."/>
            <person name="Mukherjee M."/>
            <person name="Kredics L."/>
            <person name="Alcaraz L.D."/>
            <person name="Aerts A."/>
            <person name="Antal Z."/>
            <person name="Atanasova L."/>
            <person name="Cervantes-Badillo M.G."/>
            <person name="Challacombe J."/>
            <person name="Chertkov O."/>
            <person name="McCluskey K."/>
            <person name="Coulpier F."/>
            <person name="Deshpande N."/>
            <person name="von Doehren H."/>
            <person name="Ebbole D.J."/>
            <person name="Esquivel-Naranjo E.U."/>
            <person name="Fekete E."/>
            <person name="Flipphi M."/>
            <person name="Glaser F."/>
            <person name="Gomez-Rodriguez E.Y."/>
            <person name="Gruber S."/>
            <person name="Han C."/>
            <person name="Henrissat B."/>
            <person name="Hermosa R."/>
            <person name="Hernandez-Onate M."/>
            <person name="Karaffa L."/>
            <person name="Kosti I."/>
            <person name="Le Crom S."/>
            <person name="Lindquist E."/>
            <person name="Lucas S."/>
            <person name="Luebeck M."/>
            <person name="Luebeck P.S."/>
            <person name="Margeot A."/>
            <person name="Metz B."/>
            <person name="Misra M."/>
            <person name="Nevalainen H."/>
            <person name="Omann M."/>
            <person name="Packer N."/>
            <person name="Perrone G."/>
            <person name="Uresti-Rivera E.E."/>
            <person name="Salamov A."/>
            <person name="Schmoll M."/>
            <person name="Seiboth B."/>
            <person name="Shapiro H."/>
            <person name="Sukno S."/>
            <person name="Tamayo-Ramos J.A."/>
            <person name="Tisch D."/>
            <person name="Wiest A."/>
            <person name="Wilkinson H.H."/>
            <person name="Zhang M."/>
            <person name="Coutinho P.M."/>
            <person name="Kenerley C.M."/>
            <person name="Monte E."/>
            <person name="Baker S.E."/>
            <person name="Grigoriev I.V."/>
        </authorList>
    </citation>
    <scope>NUCLEOTIDE SEQUENCE [LARGE SCALE GENOMIC DNA]</scope>
    <source>
        <strain>Gv29-8 / FGSC 10586</strain>
    </source>
</reference>
<reference key="2">
    <citation type="journal article" date="2010" name="Appl. Environ. Microbiol.">
        <title>Regulation of morphogenesis and biocontrol properties in Trichoderma virens by a VELVET protein, Vel1.</title>
        <authorList>
            <person name="Mukherjee P.K."/>
            <person name="Kenerley C.M."/>
        </authorList>
    </citation>
    <scope>FUNCTION</scope>
    <scope>DISRUPTION PHENOTYPE</scope>
</reference>
<dbReference type="EMBL" id="ABDF02000091">
    <property type="protein sequence ID" value="EHK16344.1"/>
    <property type="molecule type" value="Genomic_DNA"/>
</dbReference>
<dbReference type="RefSeq" id="XP_013950537.1">
    <property type="nucleotide sequence ID" value="XM_014095062.1"/>
</dbReference>
<dbReference type="SMR" id="G9NAW2"/>
<dbReference type="STRING" id="413071.G9NAW2"/>
<dbReference type="EnsemblFungi" id="EHK16344">
    <property type="protein sequence ID" value="EHK16344"/>
    <property type="gene ID" value="TRIVIDRAFT_164251"/>
</dbReference>
<dbReference type="GeneID" id="25788603"/>
<dbReference type="VEuPathDB" id="FungiDB:TRIVIDRAFT_164251"/>
<dbReference type="eggNOG" id="ENOG502S0HV">
    <property type="taxonomic scope" value="Eukaryota"/>
</dbReference>
<dbReference type="HOGENOM" id="CLU_022491_2_0_1"/>
<dbReference type="InParanoid" id="G9NAW2"/>
<dbReference type="OMA" id="TDITFSY"/>
<dbReference type="OrthoDB" id="5384689at2759"/>
<dbReference type="Proteomes" id="UP000007115">
    <property type="component" value="Unassembled WGS sequence"/>
</dbReference>
<dbReference type="GO" id="GO:0005737">
    <property type="term" value="C:cytoplasm"/>
    <property type="evidence" value="ECO:0007669"/>
    <property type="project" value="UniProtKB-SubCell"/>
</dbReference>
<dbReference type="GO" id="GO:0005634">
    <property type="term" value="C:nucleus"/>
    <property type="evidence" value="ECO:0007669"/>
    <property type="project" value="UniProtKB-SubCell"/>
</dbReference>
<dbReference type="GO" id="GO:0030435">
    <property type="term" value="P:sporulation resulting in formation of a cellular spore"/>
    <property type="evidence" value="ECO:0007669"/>
    <property type="project" value="UniProtKB-KW"/>
</dbReference>
<dbReference type="FunFam" id="2.60.40.3960:FF:000001">
    <property type="entry name" value="Sexual development activator VeA"/>
    <property type="match status" value="1"/>
</dbReference>
<dbReference type="Gene3D" id="2.60.40.3960">
    <property type="entry name" value="Velvet domain"/>
    <property type="match status" value="1"/>
</dbReference>
<dbReference type="InterPro" id="IPR021740">
    <property type="entry name" value="Velvet"/>
</dbReference>
<dbReference type="InterPro" id="IPR037525">
    <property type="entry name" value="Velvet_dom"/>
</dbReference>
<dbReference type="InterPro" id="IPR038491">
    <property type="entry name" value="Velvet_dom_sf"/>
</dbReference>
<dbReference type="PANTHER" id="PTHR33572:SF14">
    <property type="entry name" value="DEVELOPMENTAL AND SECONDARY METABOLISM REGULATOR VEA"/>
    <property type="match status" value="1"/>
</dbReference>
<dbReference type="PANTHER" id="PTHR33572">
    <property type="entry name" value="SPORE DEVELOPMENT REGULATOR VOSA"/>
    <property type="match status" value="1"/>
</dbReference>
<dbReference type="Pfam" id="PF11754">
    <property type="entry name" value="Velvet"/>
    <property type="match status" value="2"/>
</dbReference>
<dbReference type="PRINTS" id="PR01217">
    <property type="entry name" value="PRICHEXTENSN"/>
</dbReference>
<dbReference type="PROSITE" id="PS51821">
    <property type="entry name" value="VELVET"/>
    <property type="match status" value="1"/>
</dbReference>
<keyword id="KW-0963">Cytoplasm</keyword>
<keyword id="KW-0539">Nucleus</keyword>
<keyword id="KW-1185">Reference proteome</keyword>
<keyword id="KW-0749">Sporulation</keyword>
<keyword id="KW-0804">Transcription</keyword>
<keyword id="KW-0805">Transcription regulation</keyword>
<name>VEA_HYPVG</name>
<protein>
    <recommendedName>
        <fullName evidence="6">Developmental and secondary metabolism regulator VEL1</fullName>
    </recommendedName>
    <alternativeName>
        <fullName evidence="6">Velvet complex subunit 1</fullName>
    </alternativeName>
</protein>
<accession>G9NAW2</accession>
<evidence type="ECO:0000250" key="1">
    <source>
        <dbReference type="UniProtKB" id="C8VTV4"/>
    </source>
</evidence>
<evidence type="ECO:0000255" key="2">
    <source>
        <dbReference type="PROSITE-ProRule" id="PRU01165"/>
    </source>
</evidence>
<evidence type="ECO:0000256" key="3">
    <source>
        <dbReference type="SAM" id="MobiDB-lite"/>
    </source>
</evidence>
<evidence type="ECO:0000269" key="4">
    <source>
    </source>
</evidence>
<evidence type="ECO:0000303" key="5">
    <source>
    </source>
</evidence>
<evidence type="ECO:0000305" key="6"/>
<gene>
    <name evidence="5" type="primary">VEL1</name>
    <name type="ORF">TRIVIDRAFT_164251</name>
</gene>